<proteinExistence type="evidence at protein level"/>
<organism>
    <name type="scientific">Sulfurisphaera tokodaii (strain DSM 16993 / JCM 10545 / NBRC 100140 / 7)</name>
    <name type="common">Sulfolobus tokodaii</name>
    <dbReference type="NCBI Taxonomy" id="273063"/>
    <lineage>
        <taxon>Archaea</taxon>
        <taxon>Thermoproteota</taxon>
        <taxon>Thermoprotei</taxon>
        <taxon>Sulfolobales</taxon>
        <taxon>Sulfolobaceae</taxon>
        <taxon>Sulfurisphaera</taxon>
    </lineage>
</organism>
<dbReference type="EC" id="5.4.2.10" evidence="3"/>
<dbReference type="EC" id="5.4.2.13" evidence="3"/>
<dbReference type="EMBL" id="BA000023">
    <property type="protein sequence ID" value="BAB65203.1"/>
    <property type="molecule type" value="Genomic_DNA"/>
</dbReference>
<dbReference type="PDB" id="2F7L">
    <property type="method" value="X-ray"/>
    <property type="resolution" value="2.80 A"/>
    <property type="chains" value="A/B=1-455"/>
</dbReference>
<dbReference type="PDBsum" id="2F7L"/>
<dbReference type="SMR" id="Q976E4"/>
<dbReference type="STRING" id="273063.STK_02420"/>
<dbReference type="KEGG" id="sto:STK_02420"/>
<dbReference type="PATRIC" id="fig|273063.9.peg.288"/>
<dbReference type="eggNOG" id="arCOG00767">
    <property type="taxonomic scope" value="Archaea"/>
</dbReference>
<dbReference type="OrthoDB" id="10363at2157"/>
<dbReference type="BioCyc" id="MetaCyc:MONOMER-20593"/>
<dbReference type="BRENDA" id="5.4.2.13">
    <property type="organism ID" value="15396"/>
</dbReference>
<dbReference type="EvolutionaryTrace" id="Q976E4"/>
<dbReference type="Proteomes" id="UP000001015">
    <property type="component" value="Chromosome"/>
</dbReference>
<dbReference type="GO" id="GO:0000287">
    <property type="term" value="F:magnesium ion binding"/>
    <property type="evidence" value="ECO:0007669"/>
    <property type="project" value="InterPro"/>
</dbReference>
<dbReference type="GO" id="GO:0008966">
    <property type="term" value="F:phosphoglucosamine mutase activity"/>
    <property type="evidence" value="ECO:0007669"/>
    <property type="project" value="UniProtKB-EC"/>
</dbReference>
<dbReference type="GO" id="GO:0005975">
    <property type="term" value="P:carbohydrate metabolic process"/>
    <property type="evidence" value="ECO:0007669"/>
    <property type="project" value="InterPro"/>
</dbReference>
<dbReference type="CDD" id="cd03087">
    <property type="entry name" value="PGM_like1"/>
    <property type="match status" value="1"/>
</dbReference>
<dbReference type="FunFam" id="3.40.120.10:FF:000001">
    <property type="entry name" value="Phosphoglucosamine mutase"/>
    <property type="match status" value="1"/>
</dbReference>
<dbReference type="Gene3D" id="3.40.120.10">
    <property type="entry name" value="Alpha-D-Glucose-1,6-Bisphosphate, subunit A, domain 3"/>
    <property type="match status" value="3"/>
</dbReference>
<dbReference type="Gene3D" id="3.30.310.50">
    <property type="entry name" value="Alpha-D-phosphohexomutase, C-terminal domain"/>
    <property type="match status" value="1"/>
</dbReference>
<dbReference type="InterPro" id="IPR005844">
    <property type="entry name" value="A-D-PHexomutase_a/b/a-I"/>
</dbReference>
<dbReference type="InterPro" id="IPR016055">
    <property type="entry name" value="A-D-PHexomutase_a/b/a-I/II/III"/>
</dbReference>
<dbReference type="InterPro" id="IPR005845">
    <property type="entry name" value="A-D-PHexomutase_a/b/a-II"/>
</dbReference>
<dbReference type="InterPro" id="IPR005846">
    <property type="entry name" value="A-D-PHexomutase_a/b/a-III"/>
</dbReference>
<dbReference type="InterPro" id="IPR005843">
    <property type="entry name" value="A-D-PHexomutase_C"/>
</dbReference>
<dbReference type="InterPro" id="IPR036900">
    <property type="entry name" value="A-D-PHexomutase_C_sf"/>
</dbReference>
<dbReference type="InterPro" id="IPR016066">
    <property type="entry name" value="A-D-PHexomutase_CS"/>
</dbReference>
<dbReference type="InterPro" id="IPR005841">
    <property type="entry name" value="Alpha-D-phosphohexomutase_SF"/>
</dbReference>
<dbReference type="InterPro" id="IPR024086">
    <property type="entry name" value="GlmM_arc-type"/>
</dbReference>
<dbReference type="NCBIfam" id="TIGR03990">
    <property type="entry name" value="Arch_GlmM"/>
    <property type="match status" value="1"/>
</dbReference>
<dbReference type="PANTHER" id="PTHR43771">
    <property type="entry name" value="PHOSPHOMANNOMUTASE"/>
    <property type="match status" value="1"/>
</dbReference>
<dbReference type="PANTHER" id="PTHR43771:SF1">
    <property type="entry name" value="PHOSPHOMANNOMUTASE"/>
    <property type="match status" value="1"/>
</dbReference>
<dbReference type="Pfam" id="PF02878">
    <property type="entry name" value="PGM_PMM_I"/>
    <property type="match status" value="1"/>
</dbReference>
<dbReference type="Pfam" id="PF02879">
    <property type="entry name" value="PGM_PMM_II"/>
    <property type="match status" value="1"/>
</dbReference>
<dbReference type="Pfam" id="PF02880">
    <property type="entry name" value="PGM_PMM_III"/>
    <property type="match status" value="1"/>
</dbReference>
<dbReference type="Pfam" id="PF00408">
    <property type="entry name" value="PGM_PMM_IV"/>
    <property type="match status" value="1"/>
</dbReference>
<dbReference type="PRINTS" id="PR00509">
    <property type="entry name" value="PGMPMM"/>
</dbReference>
<dbReference type="SUPFAM" id="SSF55957">
    <property type="entry name" value="Phosphoglucomutase, C-terminal domain"/>
    <property type="match status" value="1"/>
</dbReference>
<dbReference type="SUPFAM" id="SSF53738">
    <property type="entry name" value="Phosphoglucomutase, first 3 domains"/>
    <property type="match status" value="3"/>
</dbReference>
<dbReference type="PROSITE" id="PS00710">
    <property type="entry name" value="PGM_PMM"/>
    <property type="match status" value="1"/>
</dbReference>
<keyword id="KW-0002">3D-structure</keyword>
<keyword id="KW-0413">Isomerase</keyword>
<keyword id="KW-0460">Magnesium</keyword>
<keyword id="KW-0479">Metal-binding</keyword>
<keyword id="KW-0597">Phosphoprotein</keyword>
<keyword id="KW-1185">Reference proteome</keyword>
<feature type="chain" id="PRO_0000448050" description="Phosphoglucosamine/phosphogalactosamine mutase">
    <location>
        <begin position="1"/>
        <end position="455"/>
    </location>
</feature>
<feature type="active site" description="Phosphoserine intermediate" evidence="2">
    <location>
        <position position="97"/>
    </location>
</feature>
<feature type="binding site" description="via phosphate group" evidence="1">
    <location>
        <position position="97"/>
    </location>
    <ligand>
        <name>Mg(2+)</name>
        <dbReference type="ChEBI" id="CHEBI:18420"/>
    </ligand>
</feature>
<feature type="binding site" evidence="1">
    <location>
        <position position="241"/>
    </location>
    <ligand>
        <name>Mg(2+)</name>
        <dbReference type="ChEBI" id="CHEBI:18420"/>
    </ligand>
</feature>
<feature type="binding site" evidence="1">
    <location>
        <position position="243"/>
    </location>
    <ligand>
        <name>Mg(2+)</name>
        <dbReference type="ChEBI" id="CHEBI:18420"/>
    </ligand>
</feature>
<feature type="binding site" evidence="1">
    <location>
        <position position="245"/>
    </location>
    <ligand>
        <name>Mg(2+)</name>
        <dbReference type="ChEBI" id="CHEBI:18420"/>
    </ligand>
</feature>
<feature type="modified residue" description="Phosphoserine" evidence="2">
    <location>
        <position position="97"/>
    </location>
</feature>
<feature type="strand" evidence="8">
    <location>
        <begin position="7"/>
        <end position="14"/>
    </location>
</feature>
<feature type="turn" evidence="8">
    <location>
        <begin position="15"/>
        <end position="17"/>
    </location>
</feature>
<feature type="helix" evidence="8">
    <location>
        <begin position="20"/>
        <end position="34"/>
    </location>
</feature>
<feature type="strand" evidence="8">
    <location>
        <begin position="39"/>
        <end position="44"/>
    </location>
</feature>
<feature type="helix" evidence="8">
    <location>
        <begin position="50"/>
        <end position="63"/>
    </location>
</feature>
<feature type="strand" evidence="8">
    <location>
        <begin position="67"/>
        <end position="73"/>
    </location>
</feature>
<feature type="helix" evidence="8">
    <location>
        <begin position="76"/>
        <end position="86"/>
    </location>
</feature>
<feature type="strand" evidence="8">
    <location>
        <begin position="89"/>
        <end position="94"/>
    </location>
</feature>
<feature type="strand" evidence="8">
    <location>
        <begin position="103"/>
        <end position="109"/>
    </location>
</feature>
<feature type="strand" evidence="8">
    <location>
        <begin position="113"/>
        <end position="115"/>
    </location>
</feature>
<feature type="helix" evidence="8">
    <location>
        <begin position="118"/>
        <end position="130"/>
    </location>
</feature>
<feature type="helix" evidence="8">
    <location>
        <begin position="138"/>
        <end position="140"/>
    </location>
</feature>
<feature type="helix" evidence="8">
    <location>
        <begin position="151"/>
        <end position="160"/>
    </location>
</feature>
<feature type="helix" evidence="8">
    <location>
        <begin position="165"/>
        <end position="171"/>
    </location>
</feature>
<feature type="strand" evidence="8">
    <location>
        <begin position="174"/>
        <end position="178"/>
    </location>
</feature>
<feature type="turn" evidence="8">
    <location>
        <begin position="180"/>
        <end position="182"/>
    </location>
</feature>
<feature type="helix" evidence="8">
    <location>
        <begin position="183"/>
        <end position="186"/>
    </location>
</feature>
<feature type="helix" evidence="8">
    <location>
        <begin position="188"/>
        <end position="194"/>
    </location>
</feature>
<feature type="strand" evidence="8">
    <location>
        <begin position="198"/>
        <end position="203"/>
    </location>
</feature>
<feature type="turn" evidence="8">
    <location>
        <begin position="219"/>
        <end position="221"/>
    </location>
</feature>
<feature type="helix" evidence="8">
    <location>
        <begin position="223"/>
        <end position="231"/>
    </location>
</feature>
<feature type="strand" evidence="8">
    <location>
        <begin position="235"/>
        <end position="239"/>
    </location>
</feature>
<feature type="strand" evidence="8">
    <location>
        <begin position="248"/>
        <end position="251"/>
    </location>
</feature>
<feature type="helix" evidence="8">
    <location>
        <begin position="259"/>
        <end position="272"/>
    </location>
</feature>
<feature type="strand" evidence="8">
    <location>
        <begin position="279"/>
        <end position="284"/>
    </location>
</feature>
<feature type="helix" evidence="8">
    <location>
        <begin position="290"/>
        <end position="296"/>
    </location>
</feature>
<feature type="turn" evidence="8">
    <location>
        <begin position="297"/>
        <end position="299"/>
    </location>
</feature>
<feature type="strand" evidence="8">
    <location>
        <begin position="301"/>
        <end position="305"/>
    </location>
</feature>
<feature type="helix" evidence="8">
    <location>
        <begin position="309"/>
        <end position="318"/>
    </location>
</feature>
<feature type="strand" evidence="8">
    <location>
        <begin position="322"/>
        <end position="326"/>
    </location>
</feature>
<feature type="strand" evidence="8">
    <location>
        <begin position="329"/>
        <end position="333"/>
    </location>
</feature>
<feature type="turn" evidence="8">
    <location>
        <begin position="334"/>
        <end position="336"/>
    </location>
</feature>
<feature type="strand" evidence="8">
    <location>
        <begin position="337"/>
        <end position="339"/>
    </location>
</feature>
<feature type="helix" evidence="8">
    <location>
        <begin position="342"/>
        <end position="356"/>
    </location>
</feature>
<feature type="helix" evidence="8">
    <location>
        <begin position="360"/>
        <end position="365"/>
    </location>
</feature>
<feature type="strand" evidence="8">
    <location>
        <begin position="371"/>
        <end position="378"/>
    </location>
</feature>
<feature type="helix" evidence="8">
    <location>
        <begin position="385"/>
        <end position="396"/>
    </location>
</feature>
<feature type="strand" evidence="8">
    <location>
        <begin position="401"/>
        <end position="404"/>
    </location>
</feature>
<feature type="strand" evidence="8">
    <location>
        <begin position="406"/>
        <end position="413"/>
    </location>
</feature>
<feature type="strand" evidence="8">
    <location>
        <begin position="416"/>
        <end position="422"/>
    </location>
</feature>
<feature type="strand" evidence="8">
    <location>
        <begin position="424"/>
        <end position="437"/>
    </location>
</feature>
<feature type="helix" evidence="8">
    <location>
        <begin position="438"/>
        <end position="452"/>
    </location>
</feature>
<protein>
    <recommendedName>
        <fullName evidence="5">Phosphoglucosamine/phosphogalactosamine mutase</fullName>
        <ecNumber evidence="3">5.4.2.10</ecNumber>
        <ecNumber evidence="3">5.4.2.13</ecNumber>
    </recommendedName>
    <alternativeName>
        <fullName evidence="4">PGlcNM</fullName>
    </alternativeName>
</protein>
<reference key="1">
    <citation type="journal article" date="2001" name="DNA Res.">
        <title>Complete genome sequence of an aerobic thermoacidophilic Crenarchaeon, Sulfolobus tokodaii strain7.</title>
        <authorList>
            <person name="Kawarabayasi Y."/>
            <person name="Hino Y."/>
            <person name="Horikawa H."/>
            <person name="Jin-no K."/>
            <person name="Takahashi M."/>
            <person name="Sekine M."/>
            <person name="Baba S."/>
            <person name="Ankai A."/>
            <person name="Kosugi H."/>
            <person name="Hosoyama A."/>
            <person name="Fukui S."/>
            <person name="Nagai Y."/>
            <person name="Nishijima K."/>
            <person name="Otsuka R."/>
            <person name="Nakazawa H."/>
            <person name="Takamiya M."/>
            <person name="Kato Y."/>
            <person name="Yoshizawa T."/>
            <person name="Tanaka T."/>
            <person name="Kudoh Y."/>
            <person name="Yamazaki J."/>
            <person name="Kushida N."/>
            <person name="Oguchi A."/>
            <person name="Aoki K."/>
            <person name="Masuda S."/>
            <person name="Yanagii M."/>
            <person name="Nishimura M."/>
            <person name="Yamagishi A."/>
            <person name="Oshima T."/>
            <person name="Kikuchi H."/>
        </authorList>
    </citation>
    <scope>NUCLEOTIDE SEQUENCE [LARGE SCALE GENOMIC DNA]</scope>
    <source>
        <strain>DSM 16993 / JCM 10545 / NBRC 100140 / 7</strain>
    </source>
</reference>
<reference key="2">
    <citation type="journal article" date="2018" name="J. Bacteriol.">
        <title>Identification of a direct biosynthetic pathway for UDP-N-acetylgalactosamine from glucosamine-6-phosphate in thermophilic crenarchaeon Sulfolobus tokodaii.</title>
        <authorList>
            <person name="Dadashipour M."/>
            <person name="Iwamoto M."/>
            <person name="Hossain M.M."/>
            <person name="Akutsu J.I."/>
            <person name="Zhang Z."/>
            <person name="Kawarabayasi Y."/>
        </authorList>
    </citation>
    <scope>FUNCTION</scope>
    <scope>CATALYTIC ACTIVITY</scope>
    <source>
        <strain>DSM 16993 / JCM 10545 / NBRC 100140 / 7</strain>
    </source>
</reference>
<reference evidence="7" key="3">
    <citation type="submission" date="2005-12" db="PDB data bank">
        <title>Crystal structure of Sulfolobus tokodaii phosphomannomutase/phosphoglucomutase.</title>
        <authorList>
            <person name="Kawamura T."/>
            <person name="Sakai N."/>
            <person name="Akutsu J."/>
            <person name="Zhang Z."/>
            <person name="Watanabe N."/>
            <person name="Kawarabayashi Y."/>
            <person name="Tanaka I."/>
        </authorList>
    </citation>
    <scope>X-RAY CRYSTALLOGRAPHY (2.80 ANGSTROMS)</scope>
</reference>
<sequence>MGKLFGTDGVRGIVNKELTPELVLKLSKAIGTFFGKNSKILVGRDVRAGGDMLVKIVEGGLLSVGVEVYDGGMAPTPALQYAVKTLGYDGGVVITASHNPAPYNGIKVVDKDGIEIRREKENEIEDLFFTERFNTIEWSSLTTEVKREDRVISTYVNGILSHVDIEKIKKKNYKVLIDPANSVGALSTPLVARALGCKIYTINGNLDPLFSARQPEPTFDSLKETAEVVKTLKVDLGVAHDGDADRAIFIDSEGRVQWGDRSGTLLSYWASVKNPKAIKKIVTAVSSSSLVEEYLSKYNIQVDWTKVGSVDIAHKVADENALAGFEENGGFMYPPHQYVRDGAMSFALMLELLANENVSSAELFDRLPKYYLVKTKVDLKPGLMVEEIYKKILEVYSTSSVKAITIDGVKIIGKDFWFLVRKSGTEPIIRIMAEAKDENVANNLVNELKKIVEGK</sequence>
<accession>Q976E4</accession>
<gene>
    <name evidence="6" type="ordered locus">STK_02420</name>
    <name evidence="4" type="ORF">ST0242</name>
</gene>
<comment type="function">
    <text evidence="3">Involved in the synthesis of UDP-N-acetylglucosamine (UDP-GlcNAc) and UDP-N-acetylgalactosamine (UDP-GalNAc). Catalyzes the conversion of glucosamine-6-phosphate to glucosamine-1-phosphate and of galactosamine-6-phosphate to galactosamine-1-phosphate.</text>
</comment>
<comment type="catalytic activity">
    <reaction evidence="3">
        <text>alpha-D-glucosamine 1-phosphate = D-glucosamine 6-phosphate</text>
        <dbReference type="Rhea" id="RHEA:23424"/>
        <dbReference type="ChEBI" id="CHEBI:58516"/>
        <dbReference type="ChEBI" id="CHEBI:58725"/>
        <dbReference type="EC" id="5.4.2.10"/>
    </reaction>
</comment>
<comment type="catalytic activity">
    <reaction evidence="3">
        <text>D-galactosamine 6-phosphate = alpha-D-galactosamine 1-phosphate</text>
        <dbReference type="Rhea" id="RHEA:46048"/>
        <dbReference type="ChEBI" id="CHEBI:71674"/>
        <dbReference type="ChEBI" id="CHEBI:142399"/>
        <dbReference type="EC" id="5.4.2.13"/>
    </reaction>
</comment>
<comment type="cofactor">
    <cofactor evidence="1">
        <name>Mg(2+)</name>
        <dbReference type="ChEBI" id="CHEBI:18420"/>
    </cofactor>
    <text evidence="1">Binds 1 Mg(2+) ion per subunit.</text>
</comment>
<comment type="PTM">
    <text evidence="2">Activated by phosphorylation.</text>
</comment>
<comment type="similarity">
    <text evidence="5">Belongs to the phosphohexose mutase family.</text>
</comment>
<evidence type="ECO:0000250" key="1">
    <source>
        <dbReference type="UniProtKB" id="P00949"/>
    </source>
</evidence>
<evidence type="ECO:0000250" key="2">
    <source>
        <dbReference type="UniProtKB" id="P31120"/>
    </source>
</evidence>
<evidence type="ECO:0000269" key="3">
    <source>
    </source>
</evidence>
<evidence type="ECO:0000303" key="4">
    <source>
    </source>
</evidence>
<evidence type="ECO:0000305" key="5"/>
<evidence type="ECO:0000312" key="6">
    <source>
        <dbReference type="EMBL" id="BAB65203.1"/>
    </source>
</evidence>
<evidence type="ECO:0007744" key="7">
    <source>
        <dbReference type="PDB" id="2F7L"/>
    </source>
</evidence>
<evidence type="ECO:0007829" key="8">
    <source>
        <dbReference type="PDB" id="2F7L"/>
    </source>
</evidence>
<name>PGMUT_SULTO</name>